<accession>Q2IWT7</accession>
<name>BPT_RHOP2</name>
<feature type="chain" id="PRO_0000263213" description="Aspartate/glutamate leucyltransferase">
    <location>
        <begin position="1"/>
        <end position="257"/>
    </location>
</feature>
<comment type="function">
    <text evidence="1">Functions in the N-end rule pathway of protein degradation where it conjugates Leu from its aminoacyl-tRNA to the N-termini of proteins containing an N-terminal aspartate or glutamate.</text>
</comment>
<comment type="catalytic activity">
    <reaction evidence="1">
        <text>N-terminal L-glutamyl-[protein] + L-leucyl-tRNA(Leu) = N-terminal L-leucyl-L-glutamyl-[protein] + tRNA(Leu) + H(+)</text>
        <dbReference type="Rhea" id="RHEA:50412"/>
        <dbReference type="Rhea" id="RHEA-COMP:9613"/>
        <dbReference type="Rhea" id="RHEA-COMP:9622"/>
        <dbReference type="Rhea" id="RHEA-COMP:12664"/>
        <dbReference type="Rhea" id="RHEA-COMP:12668"/>
        <dbReference type="ChEBI" id="CHEBI:15378"/>
        <dbReference type="ChEBI" id="CHEBI:64721"/>
        <dbReference type="ChEBI" id="CHEBI:78442"/>
        <dbReference type="ChEBI" id="CHEBI:78494"/>
        <dbReference type="ChEBI" id="CHEBI:133041"/>
        <dbReference type="EC" id="2.3.2.29"/>
    </reaction>
</comment>
<comment type="catalytic activity">
    <reaction evidence="1">
        <text>N-terminal L-aspartyl-[protein] + L-leucyl-tRNA(Leu) = N-terminal L-leucyl-L-aspartyl-[protein] + tRNA(Leu) + H(+)</text>
        <dbReference type="Rhea" id="RHEA:50420"/>
        <dbReference type="Rhea" id="RHEA-COMP:9613"/>
        <dbReference type="Rhea" id="RHEA-COMP:9622"/>
        <dbReference type="Rhea" id="RHEA-COMP:12669"/>
        <dbReference type="Rhea" id="RHEA-COMP:12674"/>
        <dbReference type="ChEBI" id="CHEBI:15378"/>
        <dbReference type="ChEBI" id="CHEBI:64720"/>
        <dbReference type="ChEBI" id="CHEBI:78442"/>
        <dbReference type="ChEBI" id="CHEBI:78494"/>
        <dbReference type="ChEBI" id="CHEBI:133042"/>
        <dbReference type="EC" id="2.3.2.29"/>
    </reaction>
</comment>
<comment type="subcellular location">
    <subcellularLocation>
        <location evidence="1">Cytoplasm</location>
    </subcellularLocation>
</comment>
<comment type="similarity">
    <text evidence="1">Belongs to the R-transferase family. Bpt subfamily.</text>
</comment>
<organism>
    <name type="scientific">Rhodopseudomonas palustris (strain HaA2)</name>
    <dbReference type="NCBI Taxonomy" id="316058"/>
    <lineage>
        <taxon>Bacteria</taxon>
        <taxon>Pseudomonadati</taxon>
        <taxon>Pseudomonadota</taxon>
        <taxon>Alphaproteobacteria</taxon>
        <taxon>Hyphomicrobiales</taxon>
        <taxon>Nitrobacteraceae</taxon>
        <taxon>Rhodopseudomonas</taxon>
    </lineage>
</organism>
<keyword id="KW-0012">Acyltransferase</keyword>
<keyword id="KW-0963">Cytoplasm</keyword>
<keyword id="KW-1185">Reference proteome</keyword>
<keyword id="KW-0808">Transferase</keyword>
<protein>
    <recommendedName>
        <fullName evidence="1">Aspartate/glutamate leucyltransferase</fullName>
        <ecNumber evidence="1">2.3.2.29</ecNumber>
    </recommendedName>
</protein>
<sequence length="257" mass="29199">MTQHSRDTPQFYLTAPSPCPYLPGRHERKVFTHLVGNKAGELNDLLTHGGFRRSQSIAYRPACDQCRSCVSVRVVANEFRTSRNQRKILARNADIVGEQRNPVPTSEQYSVFRAYLDQRHRHGGMADMTVLDYAMMVEDSHVETRIIEYRKRTPDTGITGRGGDLIAAALTDVLGDGLSMVYSFYEPGEQNRSLGTFMILDHIARARRLGLPYVYLGYWIEGSKKMDYKGRYLPQQRLASSGWIRIDASGEHPEPQD</sequence>
<evidence type="ECO:0000255" key="1">
    <source>
        <dbReference type="HAMAP-Rule" id="MF_00689"/>
    </source>
</evidence>
<dbReference type="EC" id="2.3.2.29" evidence="1"/>
<dbReference type="EMBL" id="CP000250">
    <property type="protein sequence ID" value="ABD07323.1"/>
    <property type="molecule type" value="Genomic_DNA"/>
</dbReference>
<dbReference type="RefSeq" id="WP_011441508.1">
    <property type="nucleotide sequence ID" value="NC_007778.1"/>
</dbReference>
<dbReference type="SMR" id="Q2IWT7"/>
<dbReference type="STRING" id="316058.RPB_2621"/>
<dbReference type="KEGG" id="rpb:RPB_2621"/>
<dbReference type="eggNOG" id="COG2935">
    <property type="taxonomic scope" value="Bacteria"/>
</dbReference>
<dbReference type="HOGENOM" id="CLU_077607_1_0_5"/>
<dbReference type="OrthoDB" id="9782022at2"/>
<dbReference type="Proteomes" id="UP000008809">
    <property type="component" value="Chromosome"/>
</dbReference>
<dbReference type="GO" id="GO:0005737">
    <property type="term" value="C:cytoplasm"/>
    <property type="evidence" value="ECO:0007669"/>
    <property type="project" value="UniProtKB-SubCell"/>
</dbReference>
<dbReference type="GO" id="GO:0004057">
    <property type="term" value="F:arginyl-tRNA--protein transferase activity"/>
    <property type="evidence" value="ECO:0007669"/>
    <property type="project" value="InterPro"/>
</dbReference>
<dbReference type="GO" id="GO:0008914">
    <property type="term" value="F:leucyl-tRNA--protein transferase activity"/>
    <property type="evidence" value="ECO:0007669"/>
    <property type="project" value="UniProtKB-UniRule"/>
</dbReference>
<dbReference type="GO" id="GO:0071596">
    <property type="term" value="P:ubiquitin-dependent protein catabolic process via the N-end rule pathway"/>
    <property type="evidence" value="ECO:0007669"/>
    <property type="project" value="InterPro"/>
</dbReference>
<dbReference type="HAMAP" id="MF_00689">
    <property type="entry name" value="Bpt"/>
    <property type="match status" value="1"/>
</dbReference>
<dbReference type="InterPro" id="IPR016181">
    <property type="entry name" value="Acyl_CoA_acyltransferase"/>
</dbReference>
<dbReference type="InterPro" id="IPR017138">
    <property type="entry name" value="Asp_Glu_LeuTrfase"/>
</dbReference>
<dbReference type="InterPro" id="IPR030700">
    <property type="entry name" value="N-end_Aminoacyl_Trfase"/>
</dbReference>
<dbReference type="InterPro" id="IPR007472">
    <property type="entry name" value="N-end_Aminoacyl_Trfase_C"/>
</dbReference>
<dbReference type="InterPro" id="IPR007471">
    <property type="entry name" value="N-end_Aminoacyl_Trfase_N"/>
</dbReference>
<dbReference type="NCBIfam" id="NF002342">
    <property type="entry name" value="PRK01305.1-3"/>
    <property type="match status" value="1"/>
</dbReference>
<dbReference type="NCBIfam" id="NF002343">
    <property type="entry name" value="PRK01305.1-4"/>
    <property type="match status" value="1"/>
</dbReference>
<dbReference type="NCBIfam" id="NF002346">
    <property type="entry name" value="PRK01305.2-3"/>
    <property type="match status" value="1"/>
</dbReference>
<dbReference type="PANTHER" id="PTHR21367">
    <property type="entry name" value="ARGININE-TRNA-PROTEIN TRANSFERASE 1"/>
    <property type="match status" value="1"/>
</dbReference>
<dbReference type="PANTHER" id="PTHR21367:SF1">
    <property type="entry name" value="ARGINYL-TRNA--PROTEIN TRANSFERASE 1"/>
    <property type="match status" value="1"/>
</dbReference>
<dbReference type="Pfam" id="PF04377">
    <property type="entry name" value="ATE_C"/>
    <property type="match status" value="1"/>
</dbReference>
<dbReference type="Pfam" id="PF04376">
    <property type="entry name" value="ATE_N"/>
    <property type="match status" value="1"/>
</dbReference>
<dbReference type="PIRSF" id="PIRSF037208">
    <property type="entry name" value="ATE_pro_prd"/>
    <property type="match status" value="1"/>
</dbReference>
<dbReference type="SUPFAM" id="SSF55729">
    <property type="entry name" value="Acyl-CoA N-acyltransferases (Nat)"/>
    <property type="match status" value="1"/>
</dbReference>
<reference key="1">
    <citation type="submission" date="2006-01" db="EMBL/GenBank/DDBJ databases">
        <title>Complete sequence of Rhodopseudomonas palustris HaA2.</title>
        <authorList>
            <consortium name="US DOE Joint Genome Institute"/>
            <person name="Copeland A."/>
            <person name="Lucas S."/>
            <person name="Lapidus A."/>
            <person name="Barry K."/>
            <person name="Detter J.C."/>
            <person name="Glavina T."/>
            <person name="Hammon N."/>
            <person name="Israni S."/>
            <person name="Pitluck S."/>
            <person name="Chain P."/>
            <person name="Malfatti S."/>
            <person name="Shin M."/>
            <person name="Vergez L."/>
            <person name="Schmutz J."/>
            <person name="Larimer F."/>
            <person name="Land M."/>
            <person name="Hauser L."/>
            <person name="Pelletier D.A."/>
            <person name="Kyrpides N."/>
            <person name="Anderson I."/>
            <person name="Oda Y."/>
            <person name="Harwood C.S."/>
            <person name="Richardson P."/>
        </authorList>
    </citation>
    <scope>NUCLEOTIDE SEQUENCE [LARGE SCALE GENOMIC DNA]</scope>
    <source>
        <strain>HaA2</strain>
    </source>
</reference>
<proteinExistence type="inferred from homology"/>
<gene>
    <name evidence="1" type="primary">bpt</name>
    <name type="ordered locus">RPB_2621</name>
</gene>